<dbReference type="EC" id="2.5.1.75"/>
<dbReference type="EMBL" id="CU329670">
    <property type="protein sequence ID" value="CAB52278.1"/>
    <property type="molecule type" value="Genomic_DNA"/>
</dbReference>
<dbReference type="PIR" id="T38664">
    <property type="entry name" value="T38664"/>
</dbReference>
<dbReference type="RefSeq" id="NP_593436.1">
    <property type="nucleotide sequence ID" value="NM_001018869.2"/>
</dbReference>
<dbReference type="SMR" id="Q9UT75"/>
<dbReference type="BioGRID" id="279498">
    <property type="interactions" value="3"/>
</dbReference>
<dbReference type="FunCoup" id="Q9UT75">
    <property type="interactions" value="559"/>
</dbReference>
<dbReference type="STRING" id="284812.Q9UT75"/>
<dbReference type="PaxDb" id="4896-SPAC343.15.1"/>
<dbReference type="EnsemblFungi" id="SPAC343.15.1">
    <property type="protein sequence ID" value="SPAC343.15.1:pep"/>
    <property type="gene ID" value="SPAC343.15"/>
</dbReference>
<dbReference type="GeneID" id="2543065"/>
<dbReference type="KEGG" id="spo:2543065"/>
<dbReference type="PomBase" id="SPAC343.15">
    <property type="gene designation" value="tit1"/>
</dbReference>
<dbReference type="VEuPathDB" id="FungiDB:SPAC343.15"/>
<dbReference type="eggNOG" id="KOG1384">
    <property type="taxonomic scope" value="Eukaryota"/>
</dbReference>
<dbReference type="HOGENOM" id="CLU_032616_2_3_1"/>
<dbReference type="InParanoid" id="Q9UT75"/>
<dbReference type="OMA" id="VPHYLID"/>
<dbReference type="PhylomeDB" id="Q9UT75"/>
<dbReference type="BRENDA" id="2.5.1.75">
    <property type="organism ID" value="5613"/>
</dbReference>
<dbReference type="PRO" id="PR:Q9UT75"/>
<dbReference type="Proteomes" id="UP000002485">
    <property type="component" value="Chromosome I"/>
</dbReference>
<dbReference type="GO" id="GO:0005829">
    <property type="term" value="C:cytosol"/>
    <property type="evidence" value="ECO:0000266"/>
    <property type="project" value="PomBase"/>
</dbReference>
<dbReference type="GO" id="GO:0005739">
    <property type="term" value="C:mitochondrion"/>
    <property type="evidence" value="ECO:0000318"/>
    <property type="project" value="GO_Central"/>
</dbReference>
<dbReference type="GO" id="GO:0005730">
    <property type="term" value="C:nucleolus"/>
    <property type="evidence" value="ECO:0000266"/>
    <property type="project" value="PomBase"/>
</dbReference>
<dbReference type="GO" id="GO:0005524">
    <property type="term" value="F:ATP binding"/>
    <property type="evidence" value="ECO:0000255"/>
    <property type="project" value="PomBase"/>
</dbReference>
<dbReference type="GO" id="GO:0052381">
    <property type="term" value="F:tRNA dimethylallyltransferase activity"/>
    <property type="evidence" value="ECO:0000318"/>
    <property type="project" value="GO_Central"/>
</dbReference>
<dbReference type="GO" id="GO:0008270">
    <property type="term" value="F:zinc ion binding"/>
    <property type="evidence" value="ECO:0007669"/>
    <property type="project" value="UniProtKB-KW"/>
</dbReference>
<dbReference type="GO" id="GO:0006400">
    <property type="term" value="P:tRNA modification"/>
    <property type="evidence" value="ECO:0000318"/>
    <property type="project" value="GO_Central"/>
</dbReference>
<dbReference type="Gene3D" id="1.10.20.140">
    <property type="match status" value="1"/>
</dbReference>
<dbReference type="Gene3D" id="3.30.160.60">
    <property type="entry name" value="Classic Zinc Finger"/>
    <property type="match status" value="1"/>
</dbReference>
<dbReference type="Gene3D" id="3.40.50.300">
    <property type="entry name" value="P-loop containing nucleotide triphosphate hydrolases"/>
    <property type="match status" value="1"/>
</dbReference>
<dbReference type="HAMAP" id="MF_00185">
    <property type="entry name" value="IPP_trans"/>
    <property type="match status" value="1"/>
</dbReference>
<dbReference type="InterPro" id="IPR039657">
    <property type="entry name" value="Dimethylallyltransferase"/>
</dbReference>
<dbReference type="InterPro" id="IPR018022">
    <property type="entry name" value="IPT"/>
</dbReference>
<dbReference type="InterPro" id="IPR027417">
    <property type="entry name" value="P-loop_NTPase"/>
</dbReference>
<dbReference type="NCBIfam" id="TIGR00174">
    <property type="entry name" value="miaA"/>
    <property type="match status" value="1"/>
</dbReference>
<dbReference type="PANTHER" id="PTHR11088">
    <property type="entry name" value="TRNA DIMETHYLALLYLTRANSFERASE"/>
    <property type="match status" value="1"/>
</dbReference>
<dbReference type="PANTHER" id="PTHR11088:SF89">
    <property type="entry name" value="TRNA DIMETHYLALLYLTRANSFERASE"/>
    <property type="match status" value="1"/>
</dbReference>
<dbReference type="Pfam" id="PF01715">
    <property type="entry name" value="IPPT"/>
    <property type="match status" value="1"/>
</dbReference>
<dbReference type="SUPFAM" id="SSF52540">
    <property type="entry name" value="P-loop containing nucleoside triphosphate hydrolases"/>
    <property type="match status" value="2"/>
</dbReference>
<name>MOD5_SCHPO</name>
<comment type="function">
    <text evidence="1">Catalyzes the transfer of a dimethylallyl group onto the adenine at position 37 of both cytosolic and mitochondrial tRNAs, leading to the formation of N6-(dimethylallyl)adenosine (i(6)A).</text>
</comment>
<comment type="catalytic activity">
    <reaction>
        <text>adenosine(37) in tRNA + dimethylallyl diphosphate = N(6)-dimethylallyladenosine(37) in tRNA + diphosphate</text>
        <dbReference type="Rhea" id="RHEA:26482"/>
        <dbReference type="Rhea" id="RHEA-COMP:10162"/>
        <dbReference type="Rhea" id="RHEA-COMP:10375"/>
        <dbReference type="ChEBI" id="CHEBI:33019"/>
        <dbReference type="ChEBI" id="CHEBI:57623"/>
        <dbReference type="ChEBI" id="CHEBI:74411"/>
        <dbReference type="ChEBI" id="CHEBI:74415"/>
        <dbReference type="EC" id="2.5.1.75"/>
    </reaction>
</comment>
<comment type="subcellular location">
    <subcellularLocation>
        <location evidence="1">Mitochondrion</location>
    </subcellularLocation>
    <subcellularLocation>
        <location evidence="1">Cytoplasm</location>
    </subcellularLocation>
    <subcellularLocation>
        <location evidence="1">Nucleus</location>
    </subcellularLocation>
</comment>
<comment type="similarity">
    <text evidence="3">Belongs to the IPP transferase family.</text>
</comment>
<protein>
    <recommendedName>
        <fullName>tRNA dimethylallyltransferase</fullName>
        <ecNumber>2.5.1.75</ecNumber>
    </recommendedName>
    <alternativeName>
        <fullName>Isopentenyl-diphosphate: tRNA isopentenyltransferase</fullName>
        <shortName>IPP transferase</shortName>
        <shortName>IPPT</shortName>
    </alternativeName>
    <alternativeName>
        <fullName>tRNA isopentenyltransferase</fullName>
        <shortName>IPTase</shortName>
    </alternativeName>
</protein>
<accession>Q9UT75</accession>
<feature type="chain" id="PRO_0000316242" description="tRNA dimethylallyltransferase">
    <location>
        <begin position="1"/>
        <end position="434"/>
    </location>
</feature>
<feature type="zinc finger region" description="Matrin-type">
    <location>
        <begin position="380"/>
        <end position="416"/>
    </location>
</feature>
<feature type="region of interest" description="Interaction with substrate tRNA" evidence="1">
    <location>
        <begin position="35"/>
        <end position="38"/>
    </location>
</feature>
<feature type="region of interest" description="Interaction with substrate tRNA" evidence="1">
    <location>
        <begin position="166"/>
        <end position="170"/>
    </location>
</feature>
<feature type="region of interest" description="Interaction with isopentenylpyrophosphate transferase" evidence="1">
    <location>
        <begin position="211"/>
        <end position="233"/>
    </location>
</feature>
<feature type="region of interest" description="Interaction with substrate tRNA" evidence="1">
    <location>
        <begin position="256"/>
        <end position="258"/>
    </location>
</feature>
<feature type="region of interest" description="Interaction with substrate tRNA" evidence="1">
    <location>
        <begin position="281"/>
        <end position="299"/>
    </location>
</feature>
<feature type="region of interest" description="Interaction with substrate tRNA" evidence="1">
    <location>
        <begin position="291"/>
        <end position="298"/>
    </location>
</feature>
<feature type="binding site" evidence="2">
    <location>
        <begin position="10"/>
        <end position="17"/>
    </location>
    <ligand>
        <name>ATP</name>
        <dbReference type="ChEBI" id="CHEBI:30616"/>
    </ligand>
</feature>
<feature type="binding site" evidence="1">
    <location>
        <begin position="12"/>
        <end position="17"/>
    </location>
    <ligand>
        <name>substrate</name>
    </ligand>
</feature>
<feature type="site" description="Interaction with substrate tRNA" evidence="1">
    <location>
        <position position="101"/>
    </location>
</feature>
<feature type="site" description="Interaction with substrate tRNA" evidence="1">
    <location>
        <position position="189"/>
    </location>
</feature>
<reference key="1">
    <citation type="journal article" date="2002" name="Nature">
        <title>The genome sequence of Schizosaccharomyces pombe.</title>
        <authorList>
            <person name="Wood V."/>
            <person name="Gwilliam R."/>
            <person name="Rajandream M.A."/>
            <person name="Lyne M.H."/>
            <person name="Lyne R."/>
            <person name="Stewart A."/>
            <person name="Sgouros J.G."/>
            <person name="Peat N."/>
            <person name="Hayles J."/>
            <person name="Baker S.G."/>
            <person name="Basham D."/>
            <person name="Bowman S."/>
            <person name="Brooks K."/>
            <person name="Brown D."/>
            <person name="Brown S."/>
            <person name="Chillingworth T."/>
            <person name="Churcher C.M."/>
            <person name="Collins M."/>
            <person name="Connor R."/>
            <person name="Cronin A."/>
            <person name="Davis P."/>
            <person name="Feltwell T."/>
            <person name="Fraser A."/>
            <person name="Gentles S."/>
            <person name="Goble A."/>
            <person name="Hamlin N."/>
            <person name="Harris D.E."/>
            <person name="Hidalgo J."/>
            <person name="Hodgson G."/>
            <person name="Holroyd S."/>
            <person name="Hornsby T."/>
            <person name="Howarth S."/>
            <person name="Huckle E.J."/>
            <person name="Hunt S."/>
            <person name="Jagels K."/>
            <person name="James K.D."/>
            <person name="Jones L."/>
            <person name="Jones M."/>
            <person name="Leather S."/>
            <person name="McDonald S."/>
            <person name="McLean J."/>
            <person name="Mooney P."/>
            <person name="Moule S."/>
            <person name="Mungall K.L."/>
            <person name="Murphy L.D."/>
            <person name="Niblett D."/>
            <person name="Odell C."/>
            <person name="Oliver K."/>
            <person name="O'Neil S."/>
            <person name="Pearson D."/>
            <person name="Quail M.A."/>
            <person name="Rabbinowitsch E."/>
            <person name="Rutherford K.M."/>
            <person name="Rutter S."/>
            <person name="Saunders D."/>
            <person name="Seeger K."/>
            <person name="Sharp S."/>
            <person name="Skelton J."/>
            <person name="Simmonds M.N."/>
            <person name="Squares R."/>
            <person name="Squares S."/>
            <person name="Stevens K."/>
            <person name="Taylor K."/>
            <person name="Taylor R.G."/>
            <person name="Tivey A."/>
            <person name="Walsh S.V."/>
            <person name="Warren T."/>
            <person name="Whitehead S."/>
            <person name="Woodward J.R."/>
            <person name="Volckaert G."/>
            <person name="Aert R."/>
            <person name="Robben J."/>
            <person name="Grymonprez B."/>
            <person name="Weltjens I."/>
            <person name="Vanstreels E."/>
            <person name="Rieger M."/>
            <person name="Schaefer M."/>
            <person name="Mueller-Auer S."/>
            <person name="Gabel C."/>
            <person name="Fuchs M."/>
            <person name="Duesterhoeft A."/>
            <person name="Fritzc C."/>
            <person name="Holzer E."/>
            <person name="Moestl D."/>
            <person name="Hilbert H."/>
            <person name="Borzym K."/>
            <person name="Langer I."/>
            <person name="Beck A."/>
            <person name="Lehrach H."/>
            <person name="Reinhardt R."/>
            <person name="Pohl T.M."/>
            <person name="Eger P."/>
            <person name="Zimmermann W."/>
            <person name="Wedler H."/>
            <person name="Wambutt R."/>
            <person name="Purnelle B."/>
            <person name="Goffeau A."/>
            <person name="Cadieu E."/>
            <person name="Dreano S."/>
            <person name="Gloux S."/>
            <person name="Lelaure V."/>
            <person name="Mottier S."/>
            <person name="Galibert F."/>
            <person name="Aves S.J."/>
            <person name="Xiang Z."/>
            <person name="Hunt C."/>
            <person name="Moore K."/>
            <person name="Hurst S.M."/>
            <person name="Lucas M."/>
            <person name="Rochet M."/>
            <person name="Gaillardin C."/>
            <person name="Tallada V.A."/>
            <person name="Garzon A."/>
            <person name="Thode G."/>
            <person name="Daga R.R."/>
            <person name="Cruzado L."/>
            <person name="Jimenez J."/>
            <person name="Sanchez M."/>
            <person name="del Rey F."/>
            <person name="Benito J."/>
            <person name="Dominguez A."/>
            <person name="Revuelta J.L."/>
            <person name="Moreno S."/>
            <person name="Armstrong J."/>
            <person name="Forsburg S.L."/>
            <person name="Cerutti L."/>
            <person name="Lowe T."/>
            <person name="McCombie W.R."/>
            <person name="Paulsen I."/>
            <person name="Potashkin J."/>
            <person name="Shpakovski G.V."/>
            <person name="Ussery D."/>
            <person name="Barrell B.G."/>
            <person name="Nurse P."/>
        </authorList>
    </citation>
    <scope>NUCLEOTIDE SEQUENCE [LARGE SCALE GENOMIC DNA]</scope>
    <source>
        <strain>972 / ATCC 24843</strain>
    </source>
</reference>
<proteinExistence type="inferred from homology"/>
<organism>
    <name type="scientific">Schizosaccharomyces pombe (strain 972 / ATCC 24843)</name>
    <name type="common">Fission yeast</name>
    <dbReference type="NCBI Taxonomy" id="284812"/>
    <lineage>
        <taxon>Eukaryota</taxon>
        <taxon>Fungi</taxon>
        <taxon>Dikarya</taxon>
        <taxon>Ascomycota</taxon>
        <taxon>Taphrinomycotina</taxon>
        <taxon>Schizosaccharomycetes</taxon>
        <taxon>Schizosaccharomycetales</taxon>
        <taxon>Schizosaccharomycetaceae</taxon>
        <taxon>Schizosaccharomyces</taxon>
    </lineage>
</organism>
<gene>
    <name type="primary">tit1</name>
    <name type="synonym">mod5</name>
    <name type="ORF">SPAC343.15</name>
</gene>
<evidence type="ECO:0000250" key="1"/>
<evidence type="ECO:0000255" key="2"/>
<evidence type="ECO:0000305" key="3"/>
<keyword id="KW-0067">ATP-binding</keyword>
<keyword id="KW-0963">Cytoplasm</keyword>
<keyword id="KW-0479">Metal-binding</keyword>
<keyword id="KW-0496">Mitochondrion</keyword>
<keyword id="KW-0547">Nucleotide-binding</keyword>
<keyword id="KW-0539">Nucleus</keyword>
<keyword id="KW-1185">Reference proteome</keyword>
<keyword id="KW-0808">Transferase</keyword>
<keyword id="KW-0819">tRNA processing</keyword>
<keyword id="KW-0862">Zinc</keyword>
<keyword id="KW-0863">Zinc-finger</keyword>
<sequence>MLKPLCVVIGTTGAGKSDLAVQLAKRFGSQVINADSMQIYRGFDTITNKITVEEQENVHHRLMSFLNFDKEYSVPEFERDASRVIDEIHSQGKIPIVVGGTHYYLQSLLFEDTTLSAIDKLTNDSSPSKPPHPDSHILDDDPSAMLSYLKKIDPVMAEQWHPRDTRKIRRSLEIYFHTGRPPSEIYSEQKMKSSGSKLRYKSLIFWAFADSLVLMPRLDKRVDKMLSHGLVDEIKSMKSLAESEKFSPDFTRGIWQCIGFKEFMPWFEAPSDIVFNDCLERMKVSTRQYAKSQKKWIQSRFLPMCLAQQDLSPSSILFSTTNTTDLNNWEEQVEKACRVFQYFFYNGDAIAPSADDQHAFEKARDYLSIMNGRQSQKKKFVCEECLDKRGDPFTVIGEDAFNVHIKSRKHKTTVRRKKERAERQIRLKNIGILK</sequence>